<feature type="chain" id="PRO_1000024861" description="Ribonuclease PH">
    <location>
        <begin position="1"/>
        <end position="239"/>
    </location>
</feature>
<feature type="binding site" evidence="1">
    <location>
        <position position="86"/>
    </location>
    <ligand>
        <name>phosphate</name>
        <dbReference type="ChEBI" id="CHEBI:43474"/>
        <note>substrate</note>
    </ligand>
</feature>
<feature type="binding site" evidence="1">
    <location>
        <begin position="124"/>
        <end position="126"/>
    </location>
    <ligand>
        <name>phosphate</name>
        <dbReference type="ChEBI" id="CHEBI:43474"/>
        <note>substrate</note>
    </ligand>
</feature>
<protein>
    <recommendedName>
        <fullName evidence="1">Ribonuclease PH</fullName>
        <shortName evidence="1">RNase PH</shortName>
        <ecNumber evidence="1">2.7.7.56</ecNumber>
    </recommendedName>
    <alternativeName>
        <fullName evidence="1">tRNA nucleotidyltransferase</fullName>
    </alternativeName>
</protein>
<reference key="1">
    <citation type="journal article" date="2006" name="Proc. Natl. Acad. Sci. U.S.A.">
        <title>The partitioned Rhizobium etli genome: genetic and metabolic redundancy in seven interacting replicons.</title>
        <authorList>
            <person name="Gonzalez V."/>
            <person name="Santamaria R.I."/>
            <person name="Bustos P."/>
            <person name="Hernandez-Gonzalez I."/>
            <person name="Medrano-Soto A."/>
            <person name="Moreno-Hagelsieb G."/>
            <person name="Janga S.C."/>
            <person name="Ramirez M.A."/>
            <person name="Jimenez-Jacinto V."/>
            <person name="Collado-Vides J."/>
            <person name="Davila G."/>
        </authorList>
    </citation>
    <scope>NUCLEOTIDE SEQUENCE [LARGE SCALE GENOMIC DNA]</scope>
    <source>
        <strain>ATCC 51251 / DSM 11541 / JCM 21823 / NBRC 15573 / CFN 42</strain>
    </source>
</reference>
<name>RNPH_RHIEC</name>
<evidence type="ECO:0000255" key="1">
    <source>
        <dbReference type="HAMAP-Rule" id="MF_00564"/>
    </source>
</evidence>
<organism>
    <name type="scientific">Rhizobium etli (strain ATCC 51251 / DSM 11541 / JCM 21823 / NBRC 15573 / CFN 42)</name>
    <dbReference type="NCBI Taxonomy" id="347834"/>
    <lineage>
        <taxon>Bacteria</taxon>
        <taxon>Pseudomonadati</taxon>
        <taxon>Pseudomonadota</taxon>
        <taxon>Alphaproteobacteria</taxon>
        <taxon>Hyphomicrobiales</taxon>
        <taxon>Rhizobiaceae</taxon>
        <taxon>Rhizobium/Agrobacterium group</taxon>
        <taxon>Rhizobium</taxon>
    </lineage>
</organism>
<keyword id="KW-0548">Nucleotidyltransferase</keyword>
<keyword id="KW-1185">Reference proteome</keyword>
<keyword id="KW-0694">RNA-binding</keyword>
<keyword id="KW-0698">rRNA processing</keyword>
<keyword id="KW-0808">Transferase</keyword>
<keyword id="KW-0819">tRNA processing</keyword>
<keyword id="KW-0820">tRNA-binding</keyword>
<accession>Q2KDA1</accession>
<sequence length="239" mass="26030">MRPSGRKTDQMRKVSFERNFSKHAEGSCLVKFGDTHVLCTASLEEKTPPWLRNTGKGWVTAEYGMLPRATGERMKREAAAGKQGGRTQEIQRLIGRSLRAVVDLQALGEKQITLDCDVIQADGGTRTASITGGWIALYDCLKWMESRNMIKVDRVLKDHVAAISCGVFANQAVIDLDYLEDSSAETDANFVMTGAGGIVEIQGTAEGTPFSEEEFSSLMRLAKNGIGELVALQKQAIAG</sequence>
<proteinExistence type="inferred from homology"/>
<dbReference type="EC" id="2.7.7.56" evidence="1"/>
<dbReference type="EMBL" id="CP000133">
    <property type="protein sequence ID" value="ABC89185.1"/>
    <property type="molecule type" value="Genomic_DNA"/>
</dbReference>
<dbReference type="RefSeq" id="WP_011423747.1">
    <property type="nucleotide sequence ID" value="NC_007761.1"/>
</dbReference>
<dbReference type="SMR" id="Q2KDA1"/>
<dbReference type="KEGG" id="ret:RHE_CH00363"/>
<dbReference type="eggNOG" id="COG0689">
    <property type="taxonomic scope" value="Bacteria"/>
</dbReference>
<dbReference type="HOGENOM" id="CLU_050858_0_0_5"/>
<dbReference type="OrthoDB" id="9802265at2"/>
<dbReference type="Proteomes" id="UP000001936">
    <property type="component" value="Chromosome"/>
</dbReference>
<dbReference type="GO" id="GO:0000175">
    <property type="term" value="F:3'-5'-RNA exonuclease activity"/>
    <property type="evidence" value="ECO:0007669"/>
    <property type="project" value="UniProtKB-UniRule"/>
</dbReference>
<dbReference type="GO" id="GO:0000049">
    <property type="term" value="F:tRNA binding"/>
    <property type="evidence" value="ECO:0007669"/>
    <property type="project" value="UniProtKB-UniRule"/>
</dbReference>
<dbReference type="GO" id="GO:0009022">
    <property type="term" value="F:tRNA nucleotidyltransferase activity"/>
    <property type="evidence" value="ECO:0007669"/>
    <property type="project" value="UniProtKB-UniRule"/>
</dbReference>
<dbReference type="GO" id="GO:0016075">
    <property type="term" value="P:rRNA catabolic process"/>
    <property type="evidence" value="ECO:0007669"/>
    <property type="project" value="UniProtKB-UniRule"/>
</dbReference>
<dbReference type="GO" id="GO:0006364">
    <property type="term" value="P:rRNA processing"/>
    <property type="evidence" value="ECO:0007669"/>
    <property type="project" value="UniProtKB-KW"/>
</dbReference>
<dbReference type="GO" id="GO:0008033">
    <property type="term" value="P:tRNA processing"/>
    <property type="evidence" value="ECO:0007669"/>
    <property type="project" value="UniProtKB-UniRule"/>
</dbReference>
<dbReference type="CDD" id="cd11362">
    <property type="entry name" value="RNase_PH_bact"/>
    <property type="match status" value="1"/>
</dbReference>
<dbReference type="FunFam" id="3.30.230.70:FF:000003">
    <property type="entry name" value="Ribonuclease PH"/>
    <property type="match status" value="1"/>
</dbReference>
<dbReference type="Gene3D" id="3.30.230.70">
    <property type="entry name" value="GHMP Kinase, N-terminal domain"/>
    <property type="match status" value="1"/>
</dbReference>
<dbReference type="HAMAP" id="MF_00564">
    <property type="entry name" value="RNase_PH"/>
    <property type="match status" value="1"/>
</dbReference>
<dbReference type="InterPro" id="IPR001247">
    <property type="entry name" value="ExoRNase_PH_dom1"/>
</dbReference>
<dbReference type="InterPro" id="IPR015847">
    <property type="entry name" value="ExoRNase_PH_dom2"/>
</dbReference>
<dbReference type="InterPro" id="IPR036345">
    <property type="entry name" value="ExoRNase_PH_dom2_sf"/>
</dbReference>
<dbReference type="InterPro" id="IPR027408">
    <property type="entry name" value="PNPase/RNase_PH_dom_sf"/>
</dbReference>
<dbReference type="InterPro" id="IPR020568">
    <property type="entry name" value="Ribosomal_Su5_D2-typ_SF"/>
</dbReference>
<dbReference type="InterPro" id="IPR050080">
    <property type="entry name" value="RNase_PH"/>
</dbReference>
<dbReference type="InterPro" id="IPR002381">
    <property type="entry name" value="RNase_PH_bac-type"/>
</dbReference>
<dbReference type="InterPro" id="IPR018336">
    <property type="entry name" value="RNase_PH_CS"/>
</dbReference>
<dbReference type="NCBIfam" id="TIGR01966">
    <property type="entry name" value="RNasePH"/>
    <property type="match status" value="1"/>
</dbReference>
<dbReference type="PANTHER" id="PTHR11953">
    <property type="entry name" value="EXOSOME COMPLEX COMPONENT"/>
    <property type="match status" value="1"/>
</dbReference>
<dbReference type="PANTHER" id="PTHR11953:SF0">
    <property type="entry name" value="EXOSOME COMPLEX COMPONENT RRP41"/>
    <property type="match status" value="1"/>
</dbReference>
<dbReference type="Pfam" id="PF01138">
    <property type="entry name" value="RNase_PH"/>
    <property type="match status" value="1"/>
</dbReference>
<dbReference type="Pfam" id="PF03725">
    <property type="entry name" value="RNase_PH_C"/>
    <property type="match status" value="1"/>
</dbReference>
<dbReference type="SUPFAM" id="SSF55666">
    <property type="entry name" value="Ribonuclease PH domain 2-like"/>
    <property type="match status" value="1"/>
</dbReference>
<dbReference type="SUPFAM" id="SSF54211">
    <property type="entry name" value="Ribosomal protein S5 domain 2-like"/>
    <property type="match status" value="1"/>
</dbReference>
<dbReference type="PROSITE" id="PS01277">
    <property type="entry name" value="RIBONUCLEASE_PH"/>
    <property type="match status" value="1"/>
</dbReference>
<comment type="function">
    <text evidence="1">Phosphorolytic 3'-5' exoribonuclease that plays an important role in tRNA 3'-end maturation. Removes nucleotide residues following the 3'-CCA terminus of tRNAs; can also add nucleotides to the ends of RNA molecules by using nucleoside diphosphates as substrates, but this may not be physiologically important. Probably plays a role in initiation of 16S rRNA degradation (leading to ribosome degradation) during starvation.</text>
</comment>
<comment type="catalytic activity">
    <reaction evidence="1">
        <text>tRNA(n+1) + phosphate = tRNA(n) + a ribonucleoside 5'-diphosphate</text>
        <dbReference type="Rhea" id="RHEA:10628"/>
        <dbReference type="Rhea" id="RHEA-COMP:17343"/>
        <dbReference type="Rhea" id="RHEA-COMP:17344"/>
        <dbReference type="ChEBI" id="CHEBI:43474"/>
        <dbReference type="ChEBI" id="CHEBI:57930"/>
        <dbReference type="ChEBI" id="CHEBI:173114"/>
        <dbReference type="EC" id="2.7.7.56"/>
    </reaction>
</comment>
<comment type="subunit">
    <text evidence="1">Homohexameric ring arranged as a trimer of dimers.</text>
</comment>
<comment type="similarity">
    <text evidence="1">Belongs to the RNase PH family.</text>
</comment>
<gene>
    <name evidence="1" type="primary">rph</name>
    <name type="ordered locus">RHE_CH00363</name>
</gene>